<organism>
    <name type="scientific">Acinetobacter baumannii (strain AYE)</name>
    <dbReference type="NCBI Taxonomy" id="509173"/>
    <lineage>
        <taxon>Bacteria</taxon>
        <taxon>Pseudomonadati</taxon>
        <taxon>Pseudomonadota</taxon>
        <taxon>Gammaproteobacteria</taxon>
        <taxon>Moraxellales</taxon>
        <taxon>Moraxellaceae</taxon>
        <taxon>Acinetobacter</taxon>
        <taxon>Acinetobacter calcoaceticus/baumannii complex</taxon>
    </lineage>
</organism>
<dbReference type="EC" id="4.2.1.-" evidence="1"/>
<dbReference type="EMBL" id="CU459141">
    <property type="protein sequence ID" value="CAM87288.1"/>
    <property type="molecule type" value="Genomic_DNA"/>
</dbReference>
<dbReference type="RefSeq" id="WP_000276200.1">
    <property type="nucleotide sequence ID" value="NZ_JBDGFB010000032.1"/>
</dbReference>
<dbReference type="SMR" id="B0VAY4"/>
<dbReference type="EnsemblBacteria" id="CAM87288">
    <property type="protein sequence ID" value="CAM87288"/>
    <property type="gene ID" value="ABAYE2440"/>
</dbReference>
<dbReference type="KEGG" id="aby:ABAYE2440"/>
<dbReference type="HOGENOM" id="CLU_059759_0_0_6"/>
<dbReference type="GO" id="GO:0016829">
    <property type="term" value="F:lyase activity"/>
    <property type="evidence" value="ECO:0007669"/>
    <property type="project" value="UniProtKB-KW"/>
</dbReference>
<dbReference type="FunFam" id="3.30.2040.10:FF:000001">
    <property type="entry name" value="D-glutamate cyclase, mitochondrial"/>
    <property type="match status" value="1"/>
</dbReference>
<dbReference type="Gene3D" id="3.40.1640.10">
    <property type="entry name" value="PSTPO5379-like"/>
    <property type="match status" value="1"/>
</dbReference>
<dbReference type="Gene3D" id="3.30.2040.10">
    <property type="entry name" value="PSTPO5379-like domain"/>
    <property type="match status" value="1"/>
</dbReference>
<dbReference type="HAMAP" id="MF_01830">
    <property type="entry name" value="Hydro_lyase"/>
    <property type="match status" value="1"/>
</dbReference>
<dbReference type="InterPro" id="IPR009906">
    <property type="entry name" value="D-Glu_cyclase"/>
</dbReference>
<dbReference type="InterPro" id="IPR038021">
    <property type="entry name" value="Putative_hydro-lyase"/>
</dbReference>
<dbReference type="InterPro" id="IPR016938">
    <property type="entry name" value="UPF0317"/>
</dbReference>
<dbReference type="NCBIfam" id="NF003969">
    <property type="entry name" value="PRK05463.1"/>
    <property type="match status" value="1"/>
</dbReference>
<dbReference type="PANTHER" id="PTHR32022">
    <property type="entry name" value="D-GLUTAMATE CYCLASE, MITOCHONDRIAL"/>
    <property type="match status" value="1"/>
</dbReference>
<dbReference type="PANTHER" id="PTHR32022:SF10">
    <property type="entry name" value="D-GLUTAMATE CYCLASE, MITOCHONDRIAL"/>
    <property type="match status" value="1"/>
</dbReference>
<dbReference type="Pfam" id="PF07286">
    <property type="entry name" value="D-Glu_cyclase"/>
    <property type="match status" value="1"/>
</dbReference>
<dbReference type="PIRSF" id="PIRSF029755">
    <property type="entry name" value="UCP029755"/>
    <property type="match status" value="1"/>
</dbReference>
<dbReference type="SUPFAM" id="SSF160920">
    <property type="entry name" value="PSTPO5379-like"/>
    <property type="match status" value="1"/>
</dbReference>
<gene>
    <name type="ordered locus">ABAYE2440</name>
</gene>
<sequence length="268" mass="29613">MYKDIKVDPAQLEAALDARLKIRAGFDKPTAGMAAGMTQVNMISVPRDWAYDFLLYAHRNPQSCPVLDVLEEGIYATKLAADSDIRTDFPRYRIWKDGEMVDEVTDAREIYNAHPDLVTFLIGCSFSFETALQEAGIEVRHIHDDTNVPMYLSNIKCEPAGRISGNMVVSMRPIPSHQISEAVKITARMPSVHGAPVHIGHPESLGIKDVNKPDFGDASRIEAGEIPVFWACGVTPQAAVMNSKIPFAISHAPGYMFITDIPDRAWMG</sequence>
<evidence type="ECO:0000255" key="1">
    <source>
        <dbReference type="HAMAP-Rule" id="MF_01830"/>
    </source>
</evidence>
<comment type="similarity">
    <text evidence="1">Belongs to the D-glutamate cyclase family.</text>
</comment>
<protein>
    <recommendedName>
        <fullName evidence="1">Putative hydro-lyase ABAYE2440</fullName>
        <ecNumber evidence="1">4.2.1.-</ecNumber>
    </recommendedName>
</protein>
<accession>B0VAY4</accession>
<name>Y2440_ACIBY</name>
<reference key="1">
    <citation type="journal article" date="2008" name="PLoS ONE">
        <title>Comparative analysis of Acinetobacters: three genomes for three lifestyles.</title>
        <authorList>
            <person name="Vallenet D."/>
            <person name="Nordmann P."/>
            <person name="Barbe V."/>
            <person name="Poirel L."/>
            <person name="Mangenot S."/>
            <person name="Bataille E."/>
            <person name="Dossat C."/>
            <person name="Gas S."/>
            <person name="Kreimeyer A."/>
            <person name="Lenoble P."/>
            <person name="Oztas S."/>
            <person name="Poulain J."/>
            <person name="Segurens B."/>
            <person name="Robert C."/>
            <person name="Abergel C."/>
            <person name="Claverie J.-M."/>
            <person name="Raoult D."/>
            <person name="Medigue C."/>
            <person name="Weissenbach J."/>
            <person name="Cruveiller S."/>
        </authorList>
    </citation>
    <scope>NUCLEOTIDE SEQUENCE [LARGE SCALE GENOMIC DNA]</scope>
    <source>
        <strain>AYE</strain>
    </source>
</reference>
<proteinExistence type="inferred from homology"/>
<keyword id="KW-0456">Lyase</keyword>
<feature type="chain" id="PRO_0000379812" description="Putative hydro-lyase ABAYE2440">
    <location>
        <begin position="1"/>
        <end position="268"/>
    </location>
</feature>